<proteinExistence type="inferred from homology"/>
<feature type="chain" id="PRO_1000099809" description="Anthranilate phosphoribosyltransferase">
    <location>
        <begin position="1"/>
        <end position="336"/>
    </location>
</feature>
<feature type="binding site" evidence="1">
    <location>
        <position position="78"/>
    </location>
    <ligand>
        <name>5-phospho-alpha-D-ribose 1-diphosphate</name>
        <dbReference type="ChEBI" id="CHEBI:58017"/>
    </ligand>
</feature>
<feature type="binding site" evidence="1">
    <location>
        <position position="78"/>
    </location>
    <ligand>
        <name>anthranilate</name>
        <dbReference type="ChEBI" id="CHEBI:16567"/>
        <label>1</label>
    </ligand>
</feature>
<feature type="binding site" evidence="1">
    <location>
        <begin position="81"/>
        <end position="82"/>
    </location>
    <ligand>
        <name>5-phospho-alpha-D-ribose 1-diphosphate</name>
        <dbReference type="ChEBI" id="CHEBI:58017"/>
    </ligand>
</feature>
<feature type="binding site" evidence="1">
    <location>
        <position position="86"/>
    </location>
    <ligand>
        <name>5-phospho-alpha-D-ribose 1-diphosphate</name>
        <dbReference type="ChEBI" id="CHEBI:58017"/>
    </ligand>
</feature>
<feature type="binding site" evidence="1">
    <location>
        <begin position="88"/>
        <end position="91"/>
    </location>
    <ligand>
        <name>5-phospho-alpha-D-ribose 1-diphosphate</name>
        <dbReference type="ChEBI" id="CHEBI:58017"/>
    </ligand>
</feature>
<feature type="binding site" evidence="1">
    <location>
        <position position="90"/>
    </location>
    <ligand>
        <name>Mg(2+)</name>
        <dbReference type="ChEBI" id="CHEBI:18420"/>
        <label>1</label>
    </ligand>
</feature>
<feature type="binding site" evidence="1">
    <location>
        <begin position="106"/>
        <end position="114"/>
    </location>
    <ligand>
        <name>5-phospho-alpha-D-ribose 1-diphosphate</name>
        <dbReference type="ChEBI" id="CHEBI:58017"/>
    </ligand>
</feature>
<feature type="binding site" evidence="1">
    <location>
        <position position="109"/>
    </location>
    <ligand>
        <name>anthranilate</name>
        <dbReference type="ChEBI" id="CHEBI:16567"/>
        <label>1</label>
    </ligand>
</feature>
<feature type="binding site" evidence="1">
    <location>
        <position position="118"/>
    </location>
    <ligand>
        <name>5-phospho-alpha-D-ribose 1-diphosphate</name>
        <dbReference type="ChEBI" id="CHEBI:58017"/>
    </ligand>
</feature>
<feature type="binding site" evidence="1">
    <location>
        <position position="164"/>
    </location>
    <ligand>
        <name>anthranilate</name>
        <dbReference type="ChEBI" id="CHEBI:16567"/>
        <label>2</label>
    </ligand>
</feature>
<feature type="binding site" evidence="1">
    <location>
        <position position="222"/>
    </location>
    <ligand>
        <name>Mg(2+)</name>
        <dbReference type="ChEBI" id="CHEBI:18420"/>
        <label>2</label>
    </ligand>
</feature>
<feature type="binding site" evidence="1">
    <location>
        <position position="223"/>
    </location>
    <ligand>
        <name>Mg(2+)</name>
        <dbReference type="ChEBI" id="CHEBI:18420"/>
        <label>1</label>
    </ligand>
</feature>
<feature type="binding site" evidence="1">
    <location>
        <position position="223"/>
    </location>
    <ligand>
        <name>Mg(2+)</name>
        <dbReference type="ChEBI" id="CHEBI:18420"/>
        <label>2</label>
    </ligand>
</feature>
<sequence length="336" mass="33514">MQEYIERVAAGEDLSLDAARDAVTTLFEDATDAEIGALLGALRAKGETEAEIAGFAQGMRDAAITVAPDCTPLVDTCGTGGDDYDTINVSTTAALVAAGAGIPTAKHGNYSVSSASGSSDVLDALGVELATDPAAVEARIETDGIGYMHAPAFHPGMEAVIGPRRDLGVRTIFNLLGPLTNPARADAQVVGVYDPALVPVLARALSRMAVDRALVVHGAGLDEFALHGDSTVAEVDGDTVTTTTVSPSTFGLAEAPIDAVAGGGPEANAADLRGIVTGELTGPKRDIVVANAGAAIYVGGGADSLAAGADRAAAAIDSGAAADTLAALTDAHAVQQ</sequence>
<comment type="function">
    <text evidence="1">Catalyzes the transfer of the phosphoribosyl group of 5-phosphorylribose-1-pyrophosphate (PRPP) to anthranilate to yield N-(5'-phosphoribosyl)-anthranilate (PRA).</text>
</comment>
<comment type="catalytic activity">
    <reaction evidence="1">
        <text>N-(5-phospho-beta-D-ribosyl)anthranilate + diphosphate = 5-phospho-alpha-D-ribose 1-diphosphate + anthranilate</text>
        <dbReference type="Rhea" id="RHEA:11768"/>
        <dbReference type="ChEBI" id="CHEBI:16567"/>
        <dbReference type="ChEBI" id="CHEBI:18277"/>
        <dbReference type="ChEBI" id="CHEBI:33019"/>
        <dbReference type="ChEBI" id="CHEBI:58017"/>
        <dbReference type="EC" id="2.4.2.18"/>
    </reaction>
</comment>
<comment type="cofactor">
    <cofactor evidence="1">
        <name>Mg(2+)</name>
        <dbReference type="ChEBI" id="CHEBI:18420"/>
    </cofactor>
    <text evidence="1">Binds 2 magnesium ions per monomer.</text>
</comment>
<comment type="pathway">
    <text evidence="1">Amino-acid biosynthesis; L-tryptophan biosynthesis; L-tryptophan from chorismate: step 2/5.</text>
</comment>
<comment type="subunit">
    <text evidence="1">Homodimer.</text>
</comment>
<comment type="similarity">
    <text evidence="1">Belongs to the anthranilate phosphoribosyltransferase family.</text>
</comment>
<protein>
    <recommendedName>
        <fullName evidence="1">Anthranilate phosphoribosyltransferase</fullName>
        <ecNumber evidence="1">2.4.2.18</ecNumber>
    </recommendedName>
</protein>
<organism>
    <name type="scientific">Halobacterium salinarum (strain ATCC 29341 / DSM 671 / R1)</name>
    <dbReference type="NCBI Taxonomy" id="478009"/>
    <lineage>
        <taxon>Archaea</taxon>
        <taxon>Methanobacteriati</taxon>
        <taxon>Methanobacteriota</taxon>
        <taxon>Stenosarchaea group</taxon>
        <taxon>Halobacteria</taxon>
        <taxon>Halobacteriales</taxon>
        <taxon>Halobacteriaceae</taxon>
        <taxon>Halobacterium</taxon>
        <taxon>Halobacterium salinarum NRC-34001</taxon>
    </lineage>
</organism>
<accession>B0R622</accession>
<dbReference type="EC" id="2.4.2.18" evidence="1"/>
<dbReference type="EMBL" id="AM774415">
    <property type="protein sequence ID" value="CAP14191.1"/>
    <property type="molecule type" value="Genomic_DNA"/>
</dbReference>
<dbReference type="RefSeq" id="WP_010903202.1">
    <property type="nucleotide sequence ID" value="NC_010364.1"/>
</dbReference>
<dbReference type="SMR" id="B0R622"/>
<dbReference type="EnsemblBacteria" id="CAP14191">
    <property type="protein sequence ID" value="CAP14191"/>
    <property type="gene ID" value="OE_3334R"/>
</dbReference>
<dbReference type="GeneID" id="89349905"/>
<dbReference type="KEGG" id="hsl:OE_3334R"/>
<dbReference type="HOGENOM" id="CLU_034315_2_1_2"/>
<dbReference type="PhylomeDB" id="B0R622"/>
<dbReference type="UniPathway" id="UPA00035">
    <property type="reaction ID" value="UER00041"/>
</dbReference>
<dbReference type="Proteomes" id="UP000001321">
    <property type="component" value="Chromosome"/>
</dbReference>
<dbReference type="GO" id="GO:0005829">
    <property type="term" value="C:cytosol"/>
    <property type="evidence" value="ECO:0007669"/>
    <property type="project" value="TreeGrafter"/>
</dbReference>
<dbReference type="GO" id="GO:0004048">
    <property type="term" value="F:anthranilate phosphoribosyltransferase activity"/>
    <property type="evidence" value="ECO:0007669"/>
    <property type="project" value="UniProtKB-UniRule"/>
</dbReference>
<dbReference type="GO" id="GO:0000287">
    <property type="term" value="F:magnesium ion binding"/>
    <property type="evidence" value="ECO:0007669"/>
    <property type="project" value="UniProtKB-UniRule"/>
</dbReference>
<dbReference type="GO" id="GO:0000162">
    <property type="term" value="P:L-tryptophan biosynthetic process"/>
    <property type="evidence" value="ECO:0007669"/>
    <property type="project" value="UniProtKB-UniRule"/>
</dbReference>
<dbReference type="FunFam" id="1.20.970.10:FF:000024">
    <property type="entry name" value="Anthranilate phosphoribosyltransferase"/>
    <property type="match status" value="1"/>
</dbReference>
<dbReference type="FunFam" id="3.40.1030.10:FF:000002">
    <property type="entry name" value="Anthranilate phosphoribosyltransferase"/>
    <property type="match status" value="1"/>
</dbReference>
<dbReference type="Gene3D" id="3.40.1030.10">
    <property type="entry name" value="Nucleoside phosphorylase/phosphoribosyltransferase catalytic domain"/>
    <property type="match status" value="1"/>
</dbReference>
<dbReference type="Gene3D" id="1.20.970.10">
    <property type="entry name" value="Transferase, Pyrimidine Nucleoside Phosphorylase, Chain C"/>
    <property type="match status" value="1"/>
</dbReference>
<dbReference type="HAMAP" id="MF_00211">
    <property type="entry name" value="TrpD"/>
    <property type="match status" value="1"/>
</dbReference>
<dbReference type="InterPro" id="IPR005940">
    <property type="entry name" value="Anthranilate_Pribosyl_Tfrase"/>
</dbReference>
<dbReference type="InterPro" id="IPR000312">
    <property type="entry name" value="Glycosyl_Trfase_fam3"/>
</dbReference>
<dbReference type="InterPro" id="IPR017459">
    <property type="entry name" value="Glycosyl_Trfase_fam3_N_dom"/>
</dbReference>
<dbReference type="InterPro" id="IPR036320">
    <property type="entry name" value="Glycosyl_Trfase_fam3_N_dom_sf"/>
</dbReference>
<dbReference type="InterPro" id="IPR035902">
    <property type="entry name" value="Nuc_phospho_transferase"/>
</dbReference>
<dbReference type="NCBIfam" id="TIGR01245">
    <property type="entry name" value="trpD"/>
    <property type="match status" value="1"/>
</dbReference>
<dbReference type="PANTHER" id="PTHR43285">
    <property type="entry name" value="ANTHRANILATE PHOSPHORIBOSYLTRANSFERASE"/>
    <property type="match status" value="1"/>
</dbReference>
<dbReference type="PANTHER" id="PTHR43285:SF2">
    <property type="entry name" value="ANTHRANILATE PHOSPHORIBOSYLTRANSFERASE"/>
    <property type="match status" value="1"/>
</dbReference>
<dbReference type="Pfam" id="PF02885">
    <property type="entry name" value="Glycos_trans_3N"/>
    <property type="match status" value="1"/>
</dbReference>
<dbReference type="Pfam" id="PF00591">
    <property type="entry name" value="Glycos_transf_3"/>
    <property type="match status" value="1"/>
</dbReference>
<dbReference type="SUPFAM" id="SSF52418">
    <property type="entry name" value="Nucleoside phosphorylase/phosphoribosyltransferase catalytic domain"/>
    <property type="match status" value="1"/>
</dbReference>
<dbReference type="SUPFAM" id="SSF47648">
    <property type="entry name" value="Nucleoside phosphorylase/phosphoribosyltransferase N-terminal domain"/>
    <property type="match status" value="1"/>
</dbReference>
<reference key="1">
    <citation type="journal article" date="2008" name="Genomics">
        <title>Evolution in the laboratory: the genome of Halobacterium salinarum strain R1 compared to that of strain NRC-1.</title>
        <authorList>
            <person name="Pfeiffer F."/>
            <person name="Schuster S.C."/>
            <person name="Broicher A."/>
            <person name="Falb M."/>
            <person name="Palm P."/>
            <person name="Rodewald K."/>
            <person name="Ruepp A."/>
            <person name="Soppa J."/>
            <person name="Tittor J."/>
            <person name="Oesterhelt D."/>
        </authorList>
    </citation>
    <scope>NUCLEOTIDE SEQUENCE [LARGE SCALE GENOMIC DNA]</scope>
    <source>
        <strain>ATCC 29341 / DSM 671 / R1</strain>
    </source>
</reference>
<name>TRPD_HALS3</name>
<keyword id="KW-0028">Amino-acid biosynthesis</keyword>
<keyword id="KW-0057">Aromatic amino acid biosynthesis</keyword>
<keyword id="KW-0328">Glycosyltransferase</keyword>
<keyword id="KW-0460">Magnesium</keyword>
<keyword id="KW-0479">Metal-binding</keyword>
<keyword id="KW-0808">Transferase</keyword>
<keyword id="KW-0822">Tryptophan biosynthesis</keyword>
<evidence type="ECO:0000255" key="1">
    <source>
        <dbReference type="HAMAP-Rule" id="MF_00211"/>
    </source>
</evidence>
<gene>
    <name evidence="1" type="primary">trpD</name>
    <name type="ordered locus">OE_3334R</name>
</gene>